<keyword id="KW-0963">Cytoplasm</keyword>
<keyword id="KW-0275">Fatty acid biosynthesis</keyword>
<keyword id="KW-0276">Fatty acid metabolism</keyword>
<keyword id="KW-0444">Lipid biosynthesis</keyword>
<keyword id="KW-0443">Lipid metabolism</keyword>
<keyword id="KW-0460">Magnesium</keyword>
<keyword id="KW-0479">Metal-binding</keyword>
<keyword id="KW-1185">Reference proteome</keyword>
<keyword id="KW-0808">Transferase</keyword>
<feature type="chain" id="PRO_0000175687" description="Holo-[acyl-carrier-protein] synthase">
    <location>
        <begin position="1"/>
        <end position="138"/>
    </location>
</feature>
<feature type="binding site" evidence="1">
    <location>
        <position position="11"/>
    </location>
    <ligand>
        <name>Mg(2+)</name>
        <dbReference type="ChEBI" id="CHEBI:18420"/>
    </ligand>
</feature>
<feature type="binding site" evidence="1">
    <location>
        <position position="65"/>
    </location>
    <ligand>
        <name>Mg(2+)</name>
        <dbReference type="ChEBI" id="CHEBI:18420"/>
    </ligand>
</feature>
<organism>
    <name type="scientific">Ralstonia nicotianae (strain ATCC BAA-1114 / GMI1000)</name>
    <name type="common">Ralstonia solanacearum</name>
    <dbReference type="NCBI Taxonomy" id="267608"/>
    <lineage>
        <taxon>Bacteria</taxon>
        <taxon>Pseudomonadati</taxon>
        <taxon>Pseudomonadota</taxon>
        <taxon>Betaproteobacteria</taxon>
        <taxon>Burkholderiales</taxon>
        <taxon>Burkholderiaceae</taxon>
        <taxon>Ralstonia</taxon>
        <taxon>Ralstonia solanacearum species complex</taxon>
    </lineage>
</organism>
<protein>
    <recommendedName>
        <fullName evidence="1">Holo-[acyl-carrier-protein] synthase</fullName>
        <shortName evidence="1">Holo-ACP synthase</shortName>
        <ecNumber evidence="1">2.7.8.7</ecNumber>
    </recommendedName>
    <alternativeName>
        <fullName evidence="1">4'-phosphopantetheinyl transferase AcpS</fullName>
    </alternativeName>
</protein>
<comment type="function">
    <text evidence="1">Transfers the 4'-phosphopantetheine moiety from coenzyme A to a Ser of acyl-carrier-protein.</text>
</comment>
<comment type="catalytic activity">
    <reaction evidence="1">
        <text>apo-[ACP] + CoA = holo-[ACP] + adenosine 3',5'-bisphosphate + H(+)</text>
        <dbReference type="Rhea" id="RHEA:12068"/>
        <dbReference type="Rhea" id="RHEA-COMP:9685"/>
        <dbReference type="Rhea" id="RHEA-COMP:9690"/>
        <dbReference type="ChEBI" id="CHEBI:15378"/>
        <dbReference type="ChEBI" id="CHEBI:29999"/>
        <dbReference type="ChEBI" id="CHEBI:57287"/>
        <dbReference type="ChEBI" id="CHEBI:58343"/>
        <dbReference type="ChEBI" id="CHEBI:64479"/>
        <dbReference type="EC" id="2.7.8.7"/>
    </reaction>
</comment>
<comment type="cofactor">
    <cofactor evidence="1">
        <name>Mg(2+)</name>
        <dbReference type="ChEBI" id="CHEBI:18420"/>
    </cofactor>
</comment>
<comment type="subcellular location">
    <subcellularLocation>
        <location evidence="1">Cytoplasm</location>
    </subcellularLocation>
</comment>
<comment type="similarity">
    <text evidence="1">Belongs to the P-Pant transferase superfamily. AcpS family.</text>
</comment>
<dbReference type="EC" id="2.7.8.7" evidence="1"/>
<dbReference type="EMBL" id="AL646052">
    <property type="protein sequence ID" value="CAD14769.1"/>
    <property type="molecule type" value="Genomic_DNA"/>
</dbReference>
<dbReference type="SMR" id="Q8Y0H7"/>
<dbReference type="STRING" id="267608.RSc1067"/>
<dbReference type="EnsemblBacteria" id="CAD14769">
    <property type="protein sequence ID" value="CAD14769"/>
    <property type="gene ID" value="RSc1067"/>
</dbReference>
<dbReference type="KEGG" id="rso:RSc1067"/>
<dbReference type="eggNOG" id="COG0736">
    <property type="taxonomic scope" value="Bacteria"/>
</dbReference>
<dbReference type="HOGENOM" id="CLU_089696_3_1_4"/>
<dbReference type="Proteomes" id="UP000001436">
    <property type="component" value="Chromosome"/>
</dbReference>
<dbReference type="GO" id="GO:0005737">
    <property type="term" value="C:cytoplasm"/>
    <property type="evidence" value="ECO:0007669"/>
    <property type="project" value="UniProtKB-SubCell"/>
</dbReference>
<dbReference type="GO" id="GO:0008897">
    <property type="term" value="F:holo-[acyl-carrier-protein] synthase activity"/>
    <property type="evidence" value="ECO:0007669"/>
    <property type="project" value="UniProtKB-UniRule"/>
</dbReference>
<dbReference type="GO" id="GO:0000287">
    <property type="term" value="F:magnesium ion binding"/>
    <property type="evidence" value="ECO:0007669"/>
    <property type="project" value="UniProtKB-UniRule"/>
</dbReference>
<dbReference type="GO" id="GO:0006633">
    <property type="term" value="P:fatty acid biosynthetic process"/>
    <property type="evidence" value="ECO:0007669"/>
    <property type="project" value="UniProtKB-UniRule"/>
</dbReference>
<dbReference type="Gene3D" id="3.90.470.20">
    <property type="entry name" value="4'-phosphopantetheinyl transferase domain"/>
    <property type="match status" value="1"/>
</dbReference>
<dbReference type="HAMAP" id="MF_00101">
    <property type="entry name" value="AcpS"/>
    <property type="match status" value="1"/>
</dbReference>
<dbReference type="InterPro" id="IPR008278">
    <property type="entry name" value="4-PPantetheinyl_Trfase_dom"/>
</dbReference>
<dbReference type="InterPro" id="IPR037143">
    <property type="entry name" value="4-PPantetheinyl_Trfase_dom_sf"/>
</dbReference>
<dbReference type="InterPro" id="IPR002582">
    <property type="entry name" value="ACPS"/>
</dbReference>
<dbReference type="InterPro" id="IPR004568">
    <property type="entry name" value="Ppantetheine-prot_Trfase_dom"/>
</dbReference>
<dbReference type="NCBIfam" id="TIGR00516">
    <property type="entry name" value="acpS"/>
    <property type="match status" value="1"/>
</dbReference>
<dbReference type="NCBIfam" id="TIGR00556">
    <property type="entry name" value="pantethn_trn"/>
    <property type="match status" value="1"/>
</dbReference>
<dbReference type="Pfam" id="PF01648">
    <property type="entry name" value="ACPS"/>
    <property type="match status" value="1"/>
</dbReference>
<dbReference type="SUPFAM" id="SSF56214">
    <property type="entry name" value="4'-phosphopantetheinyl transferase"/>
    <property type="match status" value="1"/>
</dbReference>
<name>ACPS_RALN1</name>
<evidence type="ECO:0000255" key="1">
    <source>
        <dbReference type="HAMAP-Rule" id="MF_00101"/>
    </source>
</evidence>
<reference key="1">
    <citation type="journal article" date="2002" name="Nature">
        <title>Genome sequence of the plant pathogen Ralstonia solanacearum.</title>
        <authorList>
            <person name="Salanoubat M."/>
            <person name="Genin S."/>
            <person name="Artiguenave F."/>
            <person name="Gouzy J."/>
            <person name="Mangenot S."/>
            <person name="Arlat M."/>
            <person name="Billault A."/>
            <person name="Brottier P."/>
            <person name="Camus J.-C."/>
            <person name="Cattolico L."/>
            <person name="Chandler M."/>
            <person name="Choisne N."/>
            <person name="Claudel-Renard C."/>
            <person name="Cunnac S."/>
            <person name="Demange N."/>
            <person name="Gaspin C."/>
            <person name="Lavie M."/>
            <person name="Moisan A."/>
            <person name="Robert C."/>
            <person name="Saurin W."/>
            <person name="Schiex T."/>
            <person name="Siguier P."/>
            <person name="Thebault P."/>
            <person name="Whalen M."/>
            <person name="Wincker P."/>
            <person name="Levy M."/>
            <person name="Weissenbach J."/>
            <person name="Boucher C.A."/>
        </authorList>
    </citation>
    <scope>NUCLEOTIDE SEQUENCE [LARGE SCALE GENOMIC DNA]</scope>
    <source>
        <strain>ATCC BAA-1114 / GMI1000</strain>
    </source>
</reference>
<sequence length="138" mass="15326">MSGAIYGIGTDIIQIERVEGVMQRTHGRFAEKVLGPDELRIYQARKARSERRGLAFLATRFAAKEAVSKAIGLGMHWPMTWRAVQTLNLPSGQPVVRYSGELADWIAQRGLHIQISVTDERDYAVAFAVAELQSKLSA</sequence>
<gene>
    <name evidence="1" type="primary">acpS</name>
    <name type="ordered locus">RSc1067</name>
    <name type="ORF">RS04136</name>
</gene>
<accession>Q8Y0H7</accession>
<proteinExistence type="inferred from homology"/>